<dbReference type="EMBL" id="CP000568">
    <property type="protein sequence ID" value="ABN54106.1"/>
    <property type="molecule type" value="Genomic_DNA"/>
</dbReference>
<dbReference type="SMR" id="A3DJH7"/>
<dbReference type="STRING" id="203119.Cthe_2908"/>
<dbReference type="KEGG" id="cth:Cthe_2908"/>
<dbReference type="eggNOG" id="COG0091">
    <property type="taxonomic scope" value="Bacteria"/>
</dbReference>
<dbReference type="HOGENOM" id="CLU_083987_3_3_9"/>
<dbReference type="Proteomes" id="UP000002145">
    <property type="component" value="Chromosome"/>
</dbReference>
<dbReference type="GO" id="GO:0022625">
    <property type="term" value="C:cytosolic large ribosomal subunit"/>
    <property type="evidence" value="ECO:0007669"/>
    <property type="project" value="TreeGrafter"/>
</dbReference>
<dbReference type="GO" id="GO:0019843">
    <property type="term" value="F:rRNA binding"/>
    <property type="evidence" value="ECO:0007669"/>
    <property type="project" value="UniProtKB-UniRule"/>
</dbReference>
<dbReference type="GO" id="GO:0003735">
    <property type="term" value="F:structural constituent of ribosome"/>
    <property type="evidence" value="ECO:0007669"/>
    <property type="project" value="InterPro"/>
</dbReference>
<dbReference type="GO" id="GO:0006412">
    <property type="term" value="P:translation"/>
    <property type="evidence" value="ECO:0007669"/>
    <property type="project" value="UniProtKB-UniRule"/>
</dbReference>
<dbReference type="CDD" id="cd00336">
    <property type="entry name" value="Ribosomal_L22"/>
    <property type="match status" value="1"/>
</dbReference>
<dbReference type="FunFam" id="3.90.470.10:FF:000011">
    <property type="entry name" value="50S ribosomal protein L22"/>
    <property type="match status" value="1"/>
</dbReference>
<dbReference type="Gene3D" id="3.90.470.10">
    <property type="entry name" value="Ribosomal protein L22/L17"/>
    <property type="match status" value="1"/>
</dbReference>
<dbReference type="HAMAP" id="MF_01331_B">
    <property type="entry name" value="Ribosomal_uL22_B"/>
    <property type="match status" value="1"/>
</dbReference>
<dbReference type="InterPro" id="IPR001063">
    <property type="entry name" value="Ribosomal_uL22"/>
</dbReference>
<dbReference type="InterPro" id="IPR005727">
    <property type="entry name" value="Ribosomal_uL22_bac/chlpt-type"/>
</dbReference>
<dbReference type="InterPro" id="IPR047867">
    <property type="entry name" value="Ribosomal_uL22_bac/org-type"/>
</dbReference>
<dbReference type="InterPro" id="IPR018260">
    <property type="entry name" value="Ribosomal_uL22_CS"/>
</dbReference>
<dbReference type="InterPro" id="IPR036394">
    <property type="entry name" value="Ribosomal_uL22_sf"/>
</dbReference>
<dbReference type="NCBIfam" id="TIGR01044">
    <property type="entry name" value="rplV_bact"/>
    <property type="match status" value="1"/>
</dbReference>
<dbReference type="PANTHER" id="PTHR13501">
    <property type="entry name" value="CHLOROPLAST 50S RIBOSOMAL PROTEIN L22-RELATED"/>
    <property type="match status" value="1"/>
</dbReference>
<dbReference type="PANTHER" id="PTHR13501:SF8">
    <property type="entry name" value="LARGE RIBOSOMAL SUBUNIT PROTEIN UL22M"/>
    <property type="match status" value="1"/>
</dbReference>
<dbReference type="Pfam" id="PF00237">
    <property type="entry name" value="Ribosomal_L22"/>
    <property type="match status" value="1"/>
</dbReference>
<dbReference type="SUPFAM" id="SSF54843">
    <property type="entry name" value="Ribosomal protein L22"/>
    <property type="match status" value="1"/>
</dbReference>
<dbReference type="PROSITE" id="PS00464">
    <property type="entry name" value="RIBOSOMAL_L22"/>
    <property type="match status" value="1"/>
</dbReference>
<keyword id="KW-1185">Reference proteome</keyword>
<keyword id="KW-0687">Ribonucleoprotein</keyword>
<keyword id="KW-0689">Ribosomal protein</keyword>
<keyword id="KW-0694">RNA-binding</keyword>
<keyword id="KW-0699">rRNA-binding</keyword>
<name>RL22_ACET2</name>
<proteinExistence type="inferred from homology"/>
<gene>
    <name evidence="1" type="primary">rplV</name>
    <name type="ordered locus">Cthe_2908</name>
</gene>
<sequence length="125" mass="14075">MLTKREKKELGIGKDQGKAILRYARISPRKVRIVLDLIKGKDIDEAYAILRYTPKAASSILFKLLKSAEANATNNNGLNRDNLYVAEAYADQGPTLKRILPRARGSADRIRKRTSHITLVVKERS</sequence>
<organism>
    <name type="scientific">Acetivibrio thermocellus (strain ATCC 27405 / DSM 1237 / JCM 9322 / NBRC 103400 / NCIMB 10682 / NRRL B-4536 / VPI 7372)</name>
    <name type="common">Clostridium thermocellum</name>
    <dbReference type="NCBI Taxonomy" id="203119"/>
    <lineage>
        <taxon>Bacteria</taxon>
        <taxon>Bacillati</taxon>
        <taxon>Bacillota</taxon>
        <taxon>Clostridia</taxon>
        <taxon>Eubacteriales</taxon>
        <taxon>Oscillospiraceae</taxon>
        <taxon>Acetivibrio</taxon>
    </lineage>
</organism>
<accession>A3DJH7</accession>
<evidence type="ECO:0000255" key="1">
    <source>
        <dbReference type="HAMAP-Rule" id="MF_01331"/>
    </source>
</evidence>
<evidence type="ECO:0000305" key="2"/>
<reference key="1">
    <citation type="submission" date="2007-02" db="EMBL/GenBank/DDBJ databases">
        <title>Complete sequence of Clostridium thermocellum ATCC 27405.</title>
        <authorList>
            <consortium name="US DOE Joint Genome Institute"/>
            <person name="Copeland A."/>
            <person name="Lucas S."/>
            <person name="Lapidus A."/>
            <person name="Barry K."/>
            <person name="Detter J.C."/>
            <person name="Glavina del Rio T."/>
            <person name="Hammon N."/>
            <person name="Israni S."/>
            <person name="Dalin E."/>
            <person name="Tice H."/>
            <person name="Pitluck S."/>
            <person name="Chertkov O."/>
            <person name="Brettin T."/>
            <person name="Bruce D."/>
            <person name="Han C."/>
            <person name="Tapia R."/>
            <person name="Gilna P."/>
            <person name="Schmutz J."/>
            <person name="Larimer F."/>
            <person name="Land M."/>
            <person name="Hauser L."/>
            <person name="Kyrpides N."/>
            <person name="Mikhailova N."/>
            <person name="Wu J.H.D."/>
            <person name="Newcomb M."/>
            <person name="Richardson P."/>
        </authorList>
    </citation>
    <scope>NUCLEOTIDE SEQUENCE [LARGE SCALE GENOMIC DNA]</scope>
    <source>
        <strain>ATCC 27405 / DSM 1237 / JCM 9322 / NBRC 103400 / NCIMB 10682 / NRRL B-4536 / VPI 7372</strain>
    </source>
</reference>
<comment type="function">
    <text evidence="1">This protein binds specifically to 23S rRNA; its binding is stimulated by other ribosomal proteins, e.g. L4, L17, and L20. It is important during the early stages of 50S assembly. It makes multiple contacts with different domains of the 23S rRNA in the assembled 50S subunit and ribosome (By similarity).</text>
</comment>
<comment type="function">
    <text evidence="1">The globular domain of the protein is located near the polypeptide exit tunnel on the outside of the subunit, while an extended beta-hairpin is found that lines the wall of the exit tunnel in the center of the 70S ribosome.</text>
</comment>
<comment type="subunit">
    <text evidence="1">Part of the 50S ribosomal subunit.</text>
</comment>
<comment type="similarity">
    <text evidence="1">Belongs to the universal ribosomal protein uL22 family.</text>
</comment>
<protein>
    <recommendedName>
        <fullName evidence="1">Large ribosomal subunit protein uL22</fullName>
    </recommendedName>
    <alternativeName>
        <fullName evidence="2">50S ribosomal protein L22</fullName>
    </alternativeName>
</protein>
<feature type="chain" id="PRO_0000354459" description="Large ribosomal subunit protein uL22">
    <location>
        <begin position="1"/>
        <end position="125"/>
    </location>
</feature>